<keyword id="KW-0067">ATP-binding</keyword>
<keyword id="KW-0235">DNA replication</keyword>
<keyword id="KW-0547">Nucleotide-binding</keyword>
<keyword id="KW-1185">Reference proteome</keyword>
<gene>
    <name type="primary">cdc6c</name>
    <name type="ordered locus">rrnAC2862</name>
</gene>
<sequence length="375" mass="42281">MSDDPEDRMLGWDESVFRDEHVFEIDWLPETFKHRDTQMETLKYALRPAVRGSRPLNVIARGPPGTGKTTAVQILFDELTAQTDVKTVRVNCQMDSTRYAVFSRLFAEIFDYEPPSSGISFKKLFSQITDKLVEEDEVLVVALDDVNYLFYESEASDTLYSLLRAHEAHSGAKIGVICVSSDLELDTIDALDTRVQSVFRPEEVYFNPYGQAEIADILGERADRGFNEGVVGPTVLDRVAELTEEQGGDLRVGIDLLRRAGMNAEMRASRSVETEDVEAAYDKSKYVHLSRRLRELSDSETALVEVIAAHDGQQAGDIYDAFSEQTDLGYTRYSEIINKLDQLDIIDADYTNVEGRGRSRELTLNYDADAVLERL</sequence>
<dbReference type="EMBL" id="AY596297">
    <property type="protein sequence ID" value="AAV47612.1"/>
    <property type="molecule type" value="Genomic_DNA"/>
</dbReference>
<dbReference type="RefSeq" id="WP_007187883.1">
    <property type="nucleotide sequence ID" value="NZ_CP039138.1"/>
</dbReference>
<dbReference type="SMR" id="Q5UYP1"/>
<dbReference type="STRING" id="272569.rrnAC2862"/>
<dbReference type="PaxDb" id="272569-rrnAC2862"/>
<dbReference type="EnsemblBacteria" id="AAV47612">
    <property type="protein sequence ID" value="AAV47612"/>
    <property type="gene ID" value="rrnAC2862"/>
</dbReference>
<dbReference type="KEGG" id="hma:rrnAC2862"/>
<dbReference type="PATRIC" id="fig|272569.17.peg.3433"/>
<dbReference type="eggNOG" id="arCOG00467">
    <property type="taxonomic scope" value="Archaea"/>
</dbReference>
<dbReference type="HOGENOM" id="CLU_025112_3_0_2"/>
<dbReference type="Proteomes" id="UP000001169">
    <property type="component" value="Chromosome I"/>
</dbReference>
<dbReference type="GO" id="GO:0005524">
    <property type="term" value="F:ATP binding"/>
    <property type="evidence" value="ECO:0007669"/>
    <property type="project" value="UniProtKB-UniRule"/>
</dbReference>
<dbReference type="GO" id="GO:0016887">
    <property type="term" value="F:ATP hydrolysis activity"/>
    <property type="evidence" value="ECO:0007669"/>
    <property type="project" value="InterPro"/>
</dbReference>
<dbReference type="GO" id="GO:0006260">
    <property type="term" value="P:DNA replication"/>
    <property type="evidence" value="ECO:0007669"/>
    <property type="project" value="UniProtKB-UniRule"/>
</dbReference>
<dbReference type="CDD" id="cd00009">
    <property type="entry name" value="AAA"/>
    <property type="match status" value="1"/>
</dbReference>
<dbReference type="Gene3D" id="1.10.8.60">
    <property type="match status" value="1"/>
</dbReference>
<dbReference type="Gene3D" id="3.40.50.300">
    <property type="entry name" value="P-loop containing nucleotide triphosphate hydrolases"/>
    <property type="match status" value="1"/>
</dbReference>
<dbReference type="Gene3D" id="1.10.10.10">
    <property type="entry name" value="Winged helix-like DNA-binding domain superfamily/Winged helix DNA-binding domain"/>
    <property type="match status" value="1"/>
</dbReference>
<dbReference type="HAMAP" id="MF_01407">
    <property type="entry name" value="ORC1_type_DNA_replic_protein"/>
    <property type="match status" value="1"/>
</dbReference>
<dbReference type="InterPro" id="IPR003593">
    <property type="entry name" value="AAA+_ATPase"/>
</dbReference>
<dbReference type="InterPro" id="IPR049945">
    <property type="entry name" value="AAA_22"/>
</dbReference>
<dbReference type="InterPro" id="IPR015163">
    <property type="entry name" value="Cdc6_C"/>
</dbReference>
<dbReference type="InterPro" id="IPR055237">
    <property type="entry name" value="Cdc6_lid"/>
</dbReference>
<dbReference type="InterPro" id="IPR050311">
    <property type="entry name" value="ORC1/CDC6"/>
</dbReference>
<dbReference type="InterPro" id="IPR014277">
    <property type="entry name" value="Orc1/Cdc6_arc"/>
</dbReference>
<dbReference type="InterPro" id="IPR027417">
    <property type="entry name" value="P-loop_NTPase"/>
</dbReference>
<dbReference type="InterPro" id="IPR036388">
    <property type="entry name" value="WH-like_DNA-bd_sf"/>
</dbReference>
<dbReference type="InterPro" id="IPR036390">
    <property type="entry name" value="WH_DNA-bd_sf"/>
</dbReference>
<dbReference type="NCBIfam" id="TIGR02928">
    <property type="entry name" value="orc1/cdc6 family replication initiation protein"/>
    <property type="match status" value="1"/>
</dbReference>
<dbReference type="NCBIfam" id="NF001624">
    <property type="entry name" value="PRK00411.1-2"/>
    <property type="match status" value="1"/>
</dbReference>
<dbReference type="NCBIfam" id="NF001626">
    <property type="entry name" value="PRK00411.1-5"/>
    <property type="match status" value="1"/>
</dbReference>
<dbReference type="PANTHER" id="PTHR10763:SF26">
    <property type="entry name" value="CELL DIVISION CONTROL PROTEIN 6 HOMOLOG"/>
    <property type="match status" value="1"/>
</dbReference>
<dbReference type="PANTHER" id="PTHR10763">
    <property type="entry name" value="CELL DIVISION CONTROL PROTEIN 6-RELATED"/>
    <property type="match status" value="1"/>
</dbReference>
<dbReference type="Pfam" id="PF13401">
    <property type="entry name" value="AAA_22"/>
    <property type="match status" value="1"/>
</dbReference>
<dbReference type="Pfam" id="PF22703">
    <property type="entry name" value="Cdc6_lid"/>
    <property type="match status" value="1"/>
</dbReference>
<dbReference type="SMART" id="SM00382">
    <property type="entry name" value="AAA"/>
    <property type="match status" value="1"/>
</dbReference>
<dbReference type="SMART" id="SM01074">
    <property type="entry name" value="Cdc6_C"/>
    <property type="match status" value="1"/>
</dbReference>
<dbReference type="SUPFAM" id="SSF52540">
    <property type="entry name" value="P-loop containing nucleoside triphosphate hydrolases"/>
    <property type="match status" value="1"/>
</dbReference>
<dbReference type="SUPFAM" id="SSF46785">
    <property type="entry name" value="Winged helix' DNA-binding domain"/>
    <property type="match status" value="1"/>
</dbReference>
<reference key="1">
    <citation type="journal article" date="2004" name="Genome Res.">
        <title>Genome sequence of Haloarcula marismortui: a halophilic archaeon from the Dead Sea.</title>
        <authorList>
            <person name="Baliga N.S."/>
            <person name="Bonneau R."/>
            <person name="Facciotti M.T."/>
            <person name="Pan M."/>
            <person name="Glusman G."/>
            <person name="Deutsch E.W."/>
            <person name="Shannon P."/>
            <person name="Chiu Y."/>
            <person name="Weng R.S."/>
            <person name="Gan R.R."/>
            <person name="Hung P."/>
            <person name="Date S.V."/>
            <person name="Marcotte E."/>
            <person name="Hood L."/>
            <person name="Ng W.V."/>
        </authorList>
    </citation>
    <scope>NUCLEOTIDE SEQUENCE [LARGE SCALE GENOMIC DNA]</scope>
    <source>
        <strain>ATCC 43049 / DSM 3752 / JCM 8966 / VKM B-1809</strain>
    </source>
</reference>
<protein>
    <recommendedName>
        <fullName evidence="1">ORC1-type DNA replication protein 3</fullName>
    </recommendedName>
</protein>
<feature type="chain" id="PRO_0000150988" description="ORC1-type DNA replication protein 3">
    <location>
        <begin position="1"/>
        <end position="375"/>
    </location>
</feature>
<feature type="binding site" evidence="1">
    <location>
        <begin position="66"/>
        <end position="70"/>
    </location>
    <ligand>
        <name>ATP</name>
        <dbReference type="ChEBI" id="CHEBI:30616"/>
    </ligand>
</feature>
<feature type="binding site" evidence="1">
    <location>
        <position position="209"/>
    </location>
    <ligand>
        <name>ATP</name>
        <dbReference type="ChEBI" id="CHEBI:30616"/>
    </ligand>
</feature>
<feature type="binding site" evidence="1">
    <location>
        <position position="221"/>
    </location>
    <ligand>
        <name>ATP</name>
        <dbReference type="ChEBI" id="CHEBI:30616"/>
    </ligand>
</feature>
<evidence type="ECO:0000255" key="1">
    <source>
        <dbReference type="HAMAP-Rule" id="MF_01407"/>
    </source>
</evidence>
<name>CDC6C_HALMA</name>
<comment type="function">
    <text evidence="1">Involved in regulation of DNA replication.</text>
</comment>
<comment type="similarity">
    <text evidence="1">Belongs to the CDC6/cdc18 family.</text>
</comment>
<accession>Q5UYP1</accession>
<organism>
    <name type="scientific">Haloarcula marismortui (strain ATCC 43049 / DSM 3752 / JCM 8966 / VKM B-1809)</name>
    <name type="common">Halobacterium marismortui</name>
    <dbReference type="NCBI Taxonomy" id="272569"/>
    <lineage>
        <taxon>Archaea</taxon>
        <taxon>Methanobacteriati</taxon>
        <taxon>Methanobacteriota</taxon>
        <taxon>Stenosarchaea group</taxon>
        <taxon>Halobacteria</taxon>
        <taxon>Halobacteriales</taxon>
        <taxon>Haloarculaceae</taxon>
        <taxon>Haloarcula</taxon>
    </lineage>
</organism>
<proteinExistence type="inferred from homology"/>